<protein>
    <recommendedName>
        <fullName evidence="1">O-acetyl-ADP-ribose deacetylase</fullName>
        <ecNumber evidence="1">3.1.1.106</ecNumber>
    </recommendedName>
    <alternativeName>
        <fullName evidence="1">Regulator of RNase III activity</fullName>
    </alternativeName>
</protein>
<proteinExistence type="inferred from homology"/>
<keyword id="KW-0378">Hydrolase</keyword>
<feature type="chain" id="PRO_0000409477" description="O-acetyl-ADP-ribose deacetylase">
    <location>
        <begin position="1"/>
        <end position="180"/>
    </location>
</feature>
<feature type="domain" description="Macro" evidence="1">
    <location>
        <begin position="1"/>
        <end position="175"/>
    </location>
</feature>
<feature type="active site" description="Proton acceptor" evidence="1">
    <location>
        <position position="35"/>
    </location>
</feature>
<feature type="binding site" evidence="1">
    <location>
        <begin position="11"/>
        <end position="12"/>
    </location>
    <ligand>
        <name>substrate</name>
    </ligand>
</feature>
<feature type="binding site" evidence="1">
    <location>
        <position position="25"/>
    </location>
    <ligand>
        <name>substrate</name>
    </ligand>
</feature>
<feature type="binding site" evidence="1">
    <location>
        <begin position="33"/>
        <end position="35"/>
    </location>
    <ligand>
        <name>substrate</name>
    </ligand>
</feature>
<feature type="binding site" evidence="1">
    <location>
        <begin position="122"/>
        <end position="126"/>
    </location>
    <ligand>
        <name>substrate</name>
    </ligand>
</feature>
<evidence type="ECO:0000255" key="1">
    <source>
        <dbReference type="HAMAP-Rule" id="MF_01205"/>
    </source>
</evidence>
<name>YMDB_ENT38</name>
<dbReference type="EC" id="3.1.1.106" evidence="1"/>
<dbReference type="EMBL" id="CP000653">
    <property type="protein sequence ID" value="ABP60240.1"/>
    <property type="molecule type" value="Genomic_DNA"/>
</dbReference>
<dbReference type="RefSeq" id="WP_012016957.1">
    <property type="nucleotide sequence ID" value="NC_009436.1"/>
</dbReference>
<dbReference type="SMR" id="A4W960"/>
<dbReference type="STRING" id="399742.Ent638_1561"/>
<dbReference type="KEGG" id="ent:Ent638_1561"/>
<dbReference type="eggNOG" id="COG2110">
    <property type="taxonomic scope" value="Bacteria"/>
</dbReference>
<dbReference type="HOGENOM" id="CLU_046550_5_1_6"/>
<dbReference type="OrthoDB" id="6194521at2"/>
<dbReference type="Proteomes" id="UP000000230">
    <property type="component" value="Chromosome"/>
</dbReference>
<dbReference type="GO" id="GO:0061463">
    <property type="term" value="F:O-acetyl-ADP-ribose deacetylase activity"/>
    <property type="evidence" value="ECO:0007669"/>
    <property type="project" value="UniProtKB-EC"/>
</dbReference>
<dbReference type="GO" id="GO:0001883">
    <property type="term" value="F:purine nucleoside binding"/>
    <property type="evidence" value="ECO:0007669"/>
    <property type="project" value="UniProtKB-UniRule"/>
</dbReference>
<dbReference type="GO" id="GO:0008428">
    <property type="term" value="F:ribonuclease inhibitor activity"/>
    <property type="evidence" value="ECO:0007669"/>
    <property type="project" value="UniProtKB-UniRule"/>
</dbReference>
<dbReference type="GO" id="GO:0042278">
    <property type="term" value="P:purine nucleoside metabolic process"/>
    <property type="evidence" value="ECO:0007669"/>
    <property type="project" value="UniProtKB-UniRule"/>
</dbReference>
<dbReference type="CDD" id="cd02908">
    <property type="entry name" value="Macro_OAADPr_deacetylase"/>
    <property type="match status" value="1"/>
</dbReference>
<dbReference type="Gene3D" id="3.40.220.10">
    <property type="entry name" value="Leucine Aminopeptidase, subunit E, domain 1"/>
    <property type="match status" value="1"/>
</dbReference>
<dbReference type="HAMAP" id="MF_01205">
    <property type="entry name" value="YmdB"/>
    <property type="match status" value="1"/>
</dbReference>
<dbReference type="InterPro" id="IPR002589">
    <property type="entry name" value="Macro_dom"/>
</dbReference>
<dbReference type="InterPro" id="IPR043472">
    <property type="entry name" value="Macro_dom-like"/>
</dbReference>
<dbReference type="InterPro" id="IPR024900">
    <property type="entry name" value="O-Ac-ADP-ribose_deAcase"/>
</dbReference>
<dbReference type="NCBIfam" id="NF001660">
    <property type="entry name" value="PRK00431.1-1"/>
    <property type="match status" value="1"/>
</dbReference>
<dbReference type="NCBIfam" id="NF001664">
    <property type="entry name" value="PRK00431.1-6"/>
    <property type="match status" value="1"/>
</dbReference>
<dbReference type="PANTHER" id="PTHR11106">
    <property type="entry name" value="GANGLIOSIDE INDUCED DIFFERENTIATION ASSOCIATED PROTEIN 2-RELATED"/>
    <property type="match status" value="1"/>
</dbReference>
<dbReference type="PANTHER" id="PTHR11106:SF27">
    <property type="entry name" value="MACRO DOMAIN-CONTAINING PROTEIN"/>
    <property type="match status" value="1"/>
</dbReference>
<dbReference type="Pfam" id="PF01661">
    <property type="entry name" value="Macro"/>
    <property type="match status" value="1"/>
</dbReference>
<dbReference type="SMART" id="SM00506">
    <property type="entry name" value="A1pp"/>
    <property type="match status" value="1"/>
</dbReference>
<dbReference type="SUPFAM" id="SSF52949">
    <property type="entry name" value="Macro domain-like"/>
    <property type="match status" value="1"/>
</dbReference>
<dbReference type="PROSITE" id="PS51154">
    <property type="entry name" value="MACRO"/>
    <property type="match status" value="1"/>
</dbReference>
<comment type="function">
    <text evidence="1">Deacetylates O-acetyl-ADP ribose to yield ADP-ribose and free acetate. Down-regulates ribonuclease 3 (RNase III) activity. Acts by interacting directly with the region of the ribonuclease that is required for dimerization/activation.</text>
</comment>
<comment type="catalytic activity">
    <reaction evidence="1">
        <text>3''-O-acetyl-ADP-D-ribose + H2O = ADP-D-ribose + acetate + H(+)</text>
        <dbReference type="Rhea" id="RHEA:59244"/>
        <dbReference type="ChEBI" id="CHEBI:15377"/>
        <dbReference type="ChEBI" id="CHEBI:15378"/>
        <dbReference type="ChEBI" id="CHEBI:30089"/>
        <dbReference type="ChEBI" id="CHEBI:57967"/>
        <dbReference type="ChEBI" id="CHEBI:142723"/>
        <dbReference type="EC" id="3.1.1.106"/>
    </reaction>
</comment>
<comment type="catalytic activity">
    <reaction evidence="1">
        <text>2''-O-acetyl-ADP-D-ribose + H2O = ADP-D-ribose + acetate + H(+)</text>
        <dbReference type="Rhea" id="RHEA:57060"/>
        <dbReference type="ChEBI" id="CHEBI:15377"/>
        <dbReference type="ChEBI" id="CHEBI:15378"/>
        <dbReference type="ChEBI" id="CHEBI:30089"/>
        <dbReference type="ChEBI" id="CHEBI:57967"/>
        <dbReference type="ChEBI" id="CHEBI:83767"/>
        <dbReference type="EC" id="3.1.1.106"/>
    </reaction>
</comment>
<comment type="subunit">
    <text evidence="1">Homodimer. Interacts with RNase III.</text>
</comment>
<comment type="similarity">
    <text evidence="1">Belongs to the MacroD-type family. YmdB subfamily.</text>
</comment>
<reference key="1">
    <citation type="journal article" date="2010" name="PLoS Genet.">
        <title>Genome sequence of the plant growth promoting endophytic bacterium Enterobacter sp. 638.</title>
        <authorList>
            <person name="Taghavi S."/>
            <person name="van der Lelie D."/>
            <person name="Hoffman A."/>
            <person name="Zhang Y.B."/>
            <person name="Walla M.D."/>
            <person name="Vangronsveld J."/>
            <person name="Newman L."/>
            <person name="Monchy S."/>
        </authorList>
    </citation>
    <scope>NUCLEOTIDE SEQUENCE [LARGE SCALE GENOMIC DNA]</scope>
    <source>
        <strain>638</strain>
    </source>
</reference>
<gene>
    <name evidence="1" type="primary">ymdB</name>
    <name type="ordered locus">Ent638_1561</name>
</gene>
<accession>A4W960</accession>
<organism>
    <name type="scientific">Enterobacter sp. (strain 638)</name>
    <dbReference type="NCBI Taxonomy" id="399742"/>
    <lineage>
        <taxon>Bacteria</taxon>
        <taxon>Pseudomonadati</taxon>
        <taxon>Pseudomonadota</taxon>
        <taxon>Gammaproteobacteria</taxon>
        <taxon>Enterobacterales</taxon>
        <taxon>Enterobacteriaceae</taxon>
        <taxon>Enterobacter</taxon>
    </lineage>
</organism>
<sequence length="180" mass="19141">MKPQIEVVVGDITTMEVDVIVNAANPSLMGGGGVDGAIHRAAGPQLLEACKTVRQQQGECAPGHAVITIAGDLPAKAVIHAVGPVWQGGENHEARTLQDAYLNCLRLAAANGYKTLAFPAISTGVYGYPKAAAAEIAVDTVSEFLTRKPLPERVYFVCYDEENAQLYQRLLIQRGLTPDA</sequence>